<comment type="function">
    <text evidence="1">Reduces trimethylamine-N-oxide (TMAO) into trimethylamine; an anaerobic reaction coupled to energy-yielding reactions.</text>
</comment>
<comment type="catalytic activity">
    <reaction>
        <text>trimethylamine + 2 Fe(III)-[cytochrome c] + H2O = trimethylamine N-oxide + 2 Fe(II)-[cytochrome c] + 3 H(+)</text>
        <dbReference type="Rhea" id="RHEA:24236"/>
        <dbReference type="Rhea" id="RHEA-COMP:10350"/>
        <dbReference type="Rhea" id="RHEA-COMP:14399"/>
        <dbReference type="ChEBI" id="CHEBI:15377"/>
        <dbReference type="ChEBI" id="CHEBI:15378"/>
        <dbReference type="ChEBI" id="CHEBI:15724"/>
        <dbReference type="ChEBI" id="CHEBI:29033"/>
        <dbReference type="ChEBI" id="CHEBI:29034"/>
        <dbReference type="ChEBI" id="CHEBI:58389"/>
        <dbReference type="EC" id="1.7.2.3"/>
    </reaction>
</comment>
<comment type="cofactor">
    <cofactor evidence="1">
        <name>Mo-bis(molybdopterin guanine dinucleotide)</name>
        <dbReference type="ChEBI" id="CHEBI:60539"/>
    </cofactor>
    <text evidence="1">Binds 1 molybdenum-bis(molybdopterin guanine dinucleotide) (Mo-bis-MGD) cofactor per subunit.</text>
</comment>
<comment type="subunit">
    <text evidence="1">Interacts with the N-terminal domain of TorC.</text>
</comment>
<comment type="subcellular location">
    <subcellularLocation>
        <location evidence="1">Periplasm</location>
    </subcellularLocation>
</comment>
<comment type="PTM">
    <text>Predicted to be exported by the Tat system. The position of the signal peptide cleavage has not been experimentally proven.</text>
</comment>
<comment type="similarity">
    <text evidence="3">Belongs to the prokaryotic molybdopterin-containing oxidoreductase family.</text>
</comment>
<accession>P58360</accession>
<evidence type="ECO:0000250" key="1"/>
<evidence type="ECO:0000255" key="2">
    <source>
        <dbReference type="PROSITE-ProRule" id="PRU00648"/>
    </source>
</evidence>
<evidence type="ECO:0000305" key="3"/>
<organism>
    <name type="scientific">Escherichia coli O157:H7</name>
    <dbReference type="NCBI Taxonomy" id="83334"/>
    <lineage>
        <taxon>Bacteria</taxon>
        <taxon>Pseudomonadati</taxon>
        <taxon>Pseudomonadota</taxon>
        <taxon>Gammaproteobacteria</taxon>
        <taxon>Enterobacterales</taxon>
        <taxon>Enterobacteriaceae</taxon>
        <taxon>Escherichia</taxon>
    </lineage>
</organism>
<reference key="1">
    <citation type="journal article" date="2001" name="Nature">
        <title>Genome sequence of enterohaemorrhagic Escherichia coli O157:H7.</title>
        <authorList>
            <person name="Perna N.T."/>
            <person name="Plunkett G. III"/>
            <person name="Burland V."/>
            <person name="Mau B."/>
            <person name="Glasner J.D."/>
            <person name="Rose D.J."/>
            <person name="Mayhew G.F."/>
            <person name="Evans P.S."/>
            <person name="Gregor J."/>
            <person name="Kirkpatrick H.A."/>
            <person name="Posfai G."/>
            <person name="Hackett J."/>
            <person name="Klink S."/>
            <person name="Boutin A."/>
            <person name="Shao Y."/>
            <person name="Miller L."/>
            <person name="Grotbeck E.J."/>
            <person name="Davis N.W."/>
            <person name="Lim A."/>
            <person name="Dimalanta E.T."/>
            <person name="Potamousis K."/>
            <person name="Apodaca J."/>
            <person name="Anantharaman T.S."/>
            <person name="Lin J."/>
            <person name="Yen G."/>
            <person name="Schwartz D.C."/>
            <person name="Welch R.A."/>
            <person name="Blattner F.R."/>
        </authorList>
    </citation>
    <scope>NUCLEOTIDE SEQUENCE [LARGE SCALE GENOMIC DNA]</scope>
    <source>
        <strain>O157:H7 / EDL933 / ATCC 700927 / EHEC</strain>
    </source>
</reference>
<reference key="2">
    <citation type="journal article" date="2001" name="DNA Res.">
        <title>Complete genome sequence of enterohemorrhagic Escherichia coli O157:H7 and genomic comparison with a laboratory strain K-12.</title>
        <authorList>
            <person name="Hayashi T."/>
            <person name="Makino K."/>
            <person name="Ohnishi M."/>
            <person name="Kurokawa K."/>
            <person name="Ishii K."/>
            <person name="Yokoyama K."/>
            <person name="Han C.-G."/>
            <person name="Ohtsubo E."/>
            <person name="Nakayama K."/>
            <person name="Murata T."/>
            <person name="Tanaka M."/>
            <person name="Tobe T."/>
            <person name="Iida T."/>
            <person name="Takami H."/>
            <person name="Honda T."/>
            <person name="Sasakawa C."/>
            <person name="Ogasawara N."/>
            <person name="Yasunaga T."/>
            <person name="Kuhara S."/>
            <person name="Shiba T."/>
            <person name="Hattori M."/>
            <person name="Shinagawa H."/>
        </authorList>
    </citation>
    <scope>NUCLEOTIDE SEQUENCE [LARGE SCALE GENOMIC DNA]</scope>
    <source>
        <strain>O157:H7 / Sakai / RIMD 0509952 / EHEC</strain>
    </source>
</reference>
<sequence>MNNNDLFQASRRRFLAQLGGLTVAGMLGPSLLTSRRATAAQAATEAVISKEGILTGSHWGAIRATVKDGRFVAAKPFELDKYPSKMIAGLPDHVHNAARIRYPMVRVDWLRKRHLSDTSQRGDNRFVRVSWDEALDMFYEELERVQKTHGPSALLTASGWQSTGMFHNASGMLAKAIALHGNSVGTGGDYSTGAAQVILPRVVGSMEVYEQQTSWPLVLQNSKTIVLWGSDLLKNQQANWWCPDHDVYEYYAQLKAKVAAGEIEVISIDPVVTSTHEYLGREHVKHIAVNPQTDVPLQLALAHTLYSENLYDKNFLANYCVGFEQFLPYLLGEKDGQPKDAAWAEKLTGIDAETIRGLARQMAANRTQIIAGWCVQRMQHGEQWAWMIVVLAAMLGQIGLPGGGFGFGWHYNGAGTPGRKGVILSGFSGSTSIPPVHDNSDYKGYSSTIPIARFIDAILEPGKVINWNGKSVKLPPLKMCIFAGTNPFHRHQQINRIIEGWRKLETVIAIDNQWTSTCRFADIVLPATTQFERNDLDQYGNHSNRGIIAMKQVVPPQFEARNDFDIFRELCRRFNREEAFTEGLDEMGWLKRIWQEGVQQGKGRGVHLPAFDDFWNNKEYVEFDHPQMFVRHQAFREDPDLEPLGTPSGLIEIYSKTIADMNYDDCQGHPMWFEKIERSHGGPGSQTYPLHLQSVHPDFRLHSQLCESETLRQQYTVAGKEPVFINPQDASARGIRNGDVVRVFNARGQVLAGAVVSDRYAPGVARIHEGAWHDPDKGGEPGALCKYGNPNVLTIDIGTSQLAQATSAHTTLVEIEKCNGTVEQVTAFNGPVEMVAQCEYVPASQVKL</sequence>
<gene>
    <name type="primary">torA</name>
    <name type="ordered locus">Z1415</name>
    <name type="ordered locus">ECs1152</name>
</gene>
<name>TORA_ECO57</name>
<proteinExistence type="inferred from homology"/>
<protein>
    <recommendedName>
        <fullName>Trimethylamine-N-oxide reductase 1</fullName>
        <shortName>TMAO reductase 1</shortName>
        <shortName>Trimethylamine oxidase 1</shortName>
        <ecNumber>1.7.2.3</ecNumber>
    </recommendedName>
</protein>
<feature type="signal peptide" description="Tat-type signal" evidence="2">
    <location>
        <begin position="1"/>
        <end position="39"/>
    </location>
</feature>
<feature type="chain" id="PRO_0000019153" description="Trimethylamine-N-oxide reductase 1">
    <location>
        <begin position="40"/>
        <end position="848"/>
    </location>
</feature>
<feature type="binding site" evidence="1">
    <location>
        <position position="191"/>
    </location>
    <ligand>
        <name>Mo-bis(molybdopterin guanine dinucleotide)</name>
        <dbReference type="ChEBI" id="CHEBI:60539"/>
    </ligand>
    <ligandPart>
        <name>Mo</name>
        <dbReference type="ChEBI" id="CHEBI:28685"/>
    </ligandPart>
</feature>
<keyword id="KW-0479">Metal-binding</keyword>
<keyword id="KW-0500">Molybdenum</keyword>
<keyword id="KW-0520">NAD</keyword>
<keyword id="KW-0560">Oxidoreductase</keyword>
<keyword id="KW-0574">Periplasm</keyword>
<keyword id="KW-1185">Reference proteome</keyword>
<keyword id="KW-0732">Signal</keyword>
<dbReference type="EC" id="1.7.2.3"/>
<dbReference type="EMBL" id="AE005174">
    <property type="protein sequence ID" value="AAG55544.1"/>
    <property type="molecule type" value="Genomic_DNA"/>
</dbReference>
<dbReference type="EMBL" id="BA000007">
    <property type="protein sequence ID" value="BAB34575.1"/>
    <property type="molecule type" value="Genomic_DNA"/>
</dbReference>
<dbReference type="PIR" id="D85635">
    <property type="entry name" value="D85635"/>
</dbReference>
<dbReference type="PIR" id="H90772">
    <property type="entry name" value="H90772"/>
</dbReference>
<dbReference type="RefSeq" id="WP_001063176.1">
    <property type="nucleotide sequence ID" value="NZ_VOAI01000025.1"/>
</dbReference>
<dbReference type="SMR" id="P58360"/>
<dbReference type="STRING" id="155864.Z1415"/>
<dbReference type="KEGG" id="ece:Z1415"/>
<dbReference type="KEGG" id="ecs:ECs_1152"/>
<dbReference type="PATRIC" id="fig|386585.9.peg.1268"/>
<dbReference type="eggNOG" id="COG0243">
    <property type="taxonomic scope" value="Bacteria"/>
</dbReference>
<dbReference type="HOGENOM" id="CLU_000422_13_3_6"/>
<dbReference type="OMA" id="DINWNGK"/>
<dbReference type="Proteomes" id="UP000000558">
    <property type="component" value="Chromosome"/>
</dbReference>
<dbReference type="Proteomes" id="UP000002519">
    <property type="component" value="Chromosome"/>
</dbReference>
<dbReference type="GO" id="GO:0030288">
    <property type="term" value="C:outer membrane-bounded periplasmic space"/>
    <property type="evidence" value="ECO:0007669"/>
    <property type="project" value="TreeGrafter"/>
</dbReference>
<dbReference type="GO" id="GO:0009055">
    <property type="term" value="F:electron transfer activity"/>
    <property type="evidence" value="ECO:0007669"/>
    <property type="project" value="TreeGrafter"/>
</dbReference>
<dbReference type="GO" id="GO:0030151">
    <property type="term" value="F:molybdenum ion binding"/>
    <property type="evidence" value="ECO:0007669"/>
    <property type="project" value="InterPro"/>
</dbReference>
<dbReference type="GO" id="GO:0043546">
    <property type="term" value="F:molybdopterin cofactor binding"/>
    <property type="evidence" value="ECO:0007669"/>
    <property type="project" value="InterPro"/>
</dbReference>
<dbReference type="GO" id="GO:0050626">
    <property type="term" value="F:trimethylamine-N-oxide reductase (cytochrome c) activity"/>
    <property type="evidence" value="ECO:0007669"/>
    <property type="project" value="UniProtKB-EC"/>
</dbReference>
<dbReference type="GO" id="GO:0009061">
    <property type="term" value="P:anaerobic respiration"/>
    <property type="evidence" value="ECO:0007669"/>
    <property type="project" value="TreeGrafter"/>
</dbReference>
<dbReference type="CDD" id="cd02793">
    <property type="entry name" value="MopB_CT_DMSOR-BSOR-TMAOR"/>
    <property type="match status" value="1"/>
</dbReference>
<dbReference type="CDD" id="cd02769">
    <property type="entry name" value="MopB_DMSOR-BSOR-TMAOR"/>
    <property type="match status" value="1"/>
</dbReference>
<dbReference type="FunFam" id="2.40.40.20:FF:000009">
    <property type="entry name" value="Biotin sulfoxide reductase 2"/>
    <property type="match status" value="1"/>
</dbReference>
<dbReference type="FunFam" id="3.40.228.10:FF:000003">
    <property type="entry name" value="Biotin sulfoxide reductase 2"/>
    <property type="match status" value="1"/>
</dbReference>
<dbReference type="Gene3D" id="2.40.40.20">
    <property type="match status" value="1"/>
</dbReference>
<dbReference type="Gene3D" id="3.40.50.740">
    <property type="match status" value="1"/>
</dbReference>
<dbReference type="Gene3D" id="3.40.228.10">
    <property type="entry name" value="Dimethylsulfoxide Reductase, domain 2"/>
    <property type="match status" value="1"/>
</dbReference>
<dbReference type="Gene3D" id="3.90.55.10">
    <property type="entry name" value="Dimethylsulfoxide Reductase, domain 3"/>
    <property type="match status" value="1"/>
</dbReference>
<dbReference type="InterPro" id="IPR009010">
    <property type="entry name" value="Asp_de-COase-like_dom_sf"/>
</dbReference>
<dbReference type="InterPro" id="IPR006658">
    <property type="entry name" value="BisC"/>
</dbReference>
<dbReference type="InterPro" id="IPR041954">
    <property type="entry name" value="CT_DMSOR/BSOR/TMAOR"/>
</dbReference>
<dbReference type="InterPro" id="IPR041460">
    <property type="entry name" value="Molybdopterin_N"/>
</dbReference>
<dbReference type="InterPro" id="IPR006657">
    <property type="entry name" value="MoPterin_dinucl-bd_dom"/>
</dbReference>
<dbReference type="InterPro" id="IPR006656">
    <property type="entry name" value="Mopterin_OxRdtase"/>
</dbReference>
<dbReference type="InterPro" id="IPR006655">
    <property type="entry name" value="Mopterin_OxRdtase_prok_CS"/>
</dbReference>
<dbReference type="InterPro" id="IPR050612">
    <property type="entry name" value="Prok_Mopterin_Oxidored"/>
</dbReference>
<dbReference type="InterPro" id="IPR006311">
    <property type="entry name" value="TAT_signal"/>
</dbReference>
<dbReference type="InterPro" id="IPR011887">
    <property type="entry name" value="TorA"/>
</dbReference>
<dbReference type="NCBIfam" id="TIGR00509">
    <property type="entry name" value="bisC_fam"/>
    <property type="match status" value="1"/>
</dbReference>
<dbReference type="NCBIfam" id="NF011682">
    <property type="entry name" value="PRK15102.1"/>
    <property type="match status" value="1"/>
</dbReference>
<dbReference type="NCBIfam" id="TIGR02164">
    <property type="entry name" value="torA"/>
    <property type="match status" value="1"/>
</dbReference>
<dbReference type="PANTHER" id="PTHR43742">
    <property type="entry name" value="TRIMETHYLAMINE-N-OXIDE REDUCTASE"/>
    <property type="match status" value="1"/>
</dbReference>
<dbReference type="PANTHER" id="PTHR43742:SF4">
    <property type="entry name" value="TRIMETHYLAMINE-N-OXIDE REDUCTASE 1"/>
    <property type="match status" value="1"/>
</dbReference>
<dbReference type="Pfam" id="PF00384">
    <property type="entry name" value="Molybdopterin"/>
    <property type="match status" value="1"/>
</dbReference>
<dbReference type="Pfam" id="PF18364">
    <property type="entry name" value="Molybdopterin_N"/>
    <property type="match status" value="1"/>
</dbReference>
<dbReference type="Pfam" id="PF01568">
    <property type="entry name" value="Molydop_binding"/>
    <property type="match status" value="1"/>
</dbReference>
<dbReference type="SUPFAM" id="SSF50692">
    <property type="entry name" value="ADC-like"/>
    <property type="match status" value="1"/>
</dbReference>
<dbReference type="SUPFAM" id="SSF53706">
    <property type="entry name" value="Formate dehydrogenase/DMSO reductase, domains 1-3"/>
    <property type="match status" value="1"/>
</dbReference>
<dbReference type="PROSITE" id="PS00490">
    <property type="entry name" value="MOLYBDOPTERIN_PROK_2"/>
    <property type="match status" value="1"/>
</dbReference>
<dbReference type="PROSITE" id="PS00932">
    <property type="entry name" value="MOLYBDOPTERIN_PROK_3"/>
    <property type="match status" value="1"/>
</dbReference>
<dbReference type="PROSITE" id="PS51318">
    <property type="entry name" value="TAT"/>
    <property type="match status" value="1"/>
</dbReference>